<name>VG03_BPMD2</name>
<organismHost>
    <name type="scientific">Mycobacterium</name>
    <dbReference type="NCBI Taxonomy" id="1763"/>
</organismHost>
<sequence>MALMQATHTIEGFLAVETHPRAFVAENGHVITRLSATKWGGWEGLEILEYSGDGQVEVSDEQLAEAEHASQIEAQIIAEAAAE</sequence>
<feature type="chain" id="PRO_0000164700" description="Gene 3 protein">
    <location>
        <begin position="1"/>
        <end position="83"/>
    </location>
</feature>
<gene>
    <name type="primary">3</name>
</gene>
<accession>O64199</accession>
<proteinExistence type="predicted"/>
<protein>
    <recommendedName>
        <fullName>Gene 3 protein</fullName>
    </recommendedName>
    <alternativeName>
        <fullName>Gp3</fullName>
    </alternativeName>
</protein>
<reference key="1">
    <citation type="journal article" date="1998" name="J. Mol. Biol.">
        <title>Genome structure of mycobacteriophage D29: implications for phage evolution.</title>
        <authorList>
            <person name="Ford M.E."/>
            <person name="Sarkis G.J."/>
            <person name="Belanger A.E."/>
            <person name="Hendrix R.W."/>
            <person name="Hatfull G.F."/>
        </authorList>
    </citation>
    <scope>NUCLEOTIDE SEQUENCE [LARGE SCALE GENOMIC DNA]</scope>
</reference>
<organism>
    <name type="scientific">Mycobacterium phage D29</name>
    <name type="common">Mycobacteriophage D29</name>
    <dbReference type="NCBI Taxonomy" id="28369"/>
    <lineage>
        <taxon>Viruses</taxon>
        <taxon>Duplodnaviria</taxon>
        <taxon>Heunggongvirae</taxon>
        <taxon>Uroviricota</taxon>
        <taxon>Caudoviricetes</taxon>
        <taxon>Fromanvirus</taxon>
    </lineage>
</organism>
<dbReference type="EMBL" id="AF022214">
    <property type="protein sequence ID" value="AAC18446.1"/>
    <property type="molecule type" value="Genomic_DNA"/>
</dbReference>
<dbReference type="PIR" id="C72800">
    <property type="entry name" value="C72800"/>
</dbReference>
<dbReference type="RefSeq" id="NP_046821.1">
    <property type="nucleotide sequence ID" value="NC_001900.1"/>
</dbReference>
<dbReference type="GeneID" id="1261622"/>
<dbReference type="KEGG" id="vg:1261622"/>
<dbReference type="OrthoDB" id="20206at10239"/>
<dbReference type="Proteomes" id="UP000002131">
    <property type="component" value="Segment"/>
</dbReference>
<keyword id="KW-1185">Reference proteome</keyword>